<feature type="chain" id="PRO_0000211797" description="Ribosomal RNA small subunit methyltransferase B">
    <location>
        <begin position="1"/>
        <end position="446"/>
    </location>
</feature>
<feature type="active site" description="Nucleophile" evidence="2">
    <location>
        <position position="387"/>
    </location>
</feature>
<feature type="binding site" evidence="2">
    <location>
        <begin position="261"/>
        <end position="267"/>
    </location>
    <ligand>
        <name>S-adenosyl-L-methionine</name>
        <dbReference type="ChEBI" id="CHEBI:59789"/>
    </ligand>
</feature>
<feature type="binding site" evidence="2">
    <location>
        <position position="284"/>
    </location>
    <ligand>
        <name>S-adenosyl-L-methionine</name>
        <dbReference type="ChEBI" id="CHEBI:59789"/>
    </ligand>
</feature>
<feature type="binding site" evidence="2">
    <location>
        <position position="310"/>
    </location>
    <ligand>
        <name>S-adenosyl-L-methionine</name>
        <dbReference type="ChEBI" id="CHEBI:59789"/>
    </ligand>
</feature>
<feature type="binding site" evidence="2">
    <location>
        <position position="334"/>
    </location>
    <ligand>
        <name>S-adenosyl-L-methionine</name>
        <dbReference type="ChEBI" id="CHEBI:59789"/>
    </ligand>
</feature>
<comment type="function">
    <text evidence="1">Specifically methylates the cytosine at position 967 (m5C967) of 16S rRNA.</text>
</comment>
<comment type="catalytic activity">
    <reaction>
        <text>cytidine(967) in 16S rRNA + S-adenosyl-L-methionine = 5-methylcytidine(967) in 16S rRNA + S-adenosyl-L-homocysteine + H(+)</text>
        <dbReference type="Rhea" id="RHEA:42748"/>
        <dbReference type="Rhea" id="RHEA-COMP:10219"/>
        <dbReference type="Rhea" id="RHEA-COMP:10220"/>
        <dbReference type="ChEBI" id="CHEBI:15378"/>
        <dbReference type="ChEBI" id="CHEBI:57856"/>
        <dbReference type="ChEBI" id="CHEBI:59789"/>
        <dbReference type="ChEBI" id="CHEBI:74483"/>
        <dbReference type="ChEBI" id="CHEBI:82748"/>
        <dbReference type="EC" id="2.1.1.176"/>
    </reaction>
</comment>
<comment type="subcellular location">
    <subcellularLocation>
        <location evidence="3">Cytoplasm</location>
    </subcellularLocation>
</comment>
<comment type="similarity">
    <text evidence="2">Belongs to the class I-like SAM-binding methyltransferase superfamily. RsmB/NOP family.</text>
</comment>
<organism>
    <name type="scientific">Pasteurella multocida (strain Pm70)</name>
    <dbReference type="NCBI Taxonomy" id="272843"/>
    <lineage>
        <taxon>Bacteria</taxon>
        <taxon>Pseudomonadati</taxon>
        <taxon>Pseudomonadota</taxon>
        <taxon>Gammaproteobacteria</taxon>
        <taxon>Pasteurellales</taxon>
        <taxon>Pasteurellaceae</taxon>
        <taxon>Pasteurella</taxon>
    </lineage>
</organism>
<gene>
    <name type="primary">rsmB</name>
    <name type="synonym">rrmB</name>
    <name type="synonym">sun</name>
    <name type="ordered locus">PM1561</name>
</gene>
<accession>Q9CKP7</accession>
<evidence type="ECO:0000250" key="1"/>
<evidence type="ECO:0000255" key="2">
    <source>
        <dbReference type="PROSITE-ProRule" id="PRU01023"/>
    </source>
</evidence>
<evidence type="ECO:0000305" key="3"/>
<dbReference type="EC" id="2.1.1.176"/>
<dbReference type="EMBL" id="AE004439">
    <property type="protein sequence ID" value="AAK03645.1"/>
    <property type="molecule type" value="Genomic_DNA"/>
</dbReference>
<dbReference type="RefSeq" id="WP_010907231.1">
    <property type="nucleotide sequence ID" value="NC_002663.1"/>
</dbReference>
<dbReference type="SMR" id="Q9CKP7"/>
<dbReference type="STRING" id="272843.PM1561"/>
<dbReference type="EnsemblBacteria" id="AAK03645">
    <property type="protein sequence ID" value="AAK03645"/>
    <property type="gene ID" value="PM1561"/>
</dbReference>
<dbReference type="KEGG" id="pmu:PM1561"/>
<dbReference type="PATRIC" id="fig|272843.6.peg.1578"/>
<dbReference type="HOGENOM" id="CLU_005316_0_4_6"/>
<dbReference type="OrthoDB" id="9810297at2"/>
<dbReference type="Proteomes" id="UP000000809">
    <property type="component" value="Chromosome"/>
</dbReference>
<dbReference type="GO" id="GO:0005829">
    <property type="term" value="C:cytosol"/>
    <property type="evidence" value="ECO:0007669"/>
    <property type="project" value="TreeGrafter"/>
</dbReference>
<dbReference type="GO" id="GO:0003723">
    <property type="term" value="F:RNA binding"/>
    <property type="evidence" value="ECO:0007669"/>
    <property type="project" value="UniProtKB-KW"/>
</dbReference>
<dbReference type="GO" id="GO:0009383">
    <property type="term" value="F:rRNA (cytosine-C5-)-methyltransferase activity"/>
    <property type="evidence" value="ECO:0007669"/>
    <property type="project" value="TreeGrafter"/>
</dbReference>
<dbReference type="GO" id="GO:0006355">
    <property type="term" value="P:regulation of DNA-templated transcription"/>
    <property type="evidence" value="ECO:0007669"/>
    <property type="project" value="InterPro"/>
</dbReference>
<dbReference type="GO" id="GO:0070475">
    <property type="term" value="P:rRNA base methylation"/>
    <property type="evidence" value="ECO:0007669"/>
    <property type="project" value="TreeGrafter"/>
</dbReference>
<dbReference type="CDD" id="cd02440">
    <property type="entry name" value="AdoMet_MTases"/>
    <property type="match status" value="1"/>
</dbReference>
<dbReference type="FunFam" id="1.10.940.10:FF:000002">
    <property type="entry name" value="Ribosomal RNA small subunit methyltransferase B"/>
    <property type="match status" value="1"/>
</dbReference>
<dbReference type="FunFam" id="3.30.70.1170:FF:000002">
    <property type="entry name" value="Ribosomal RNA small subunit methyltransferase B"/>
    <property type="match status" value="1"/>
</dbReference>
<dbReference type="FunFam" id="3.40.50.150:FF:000022">
    <property type="entry name" value="Ribosomal RNA small subunit methyltransferase B"/>
    <property type="match status" value="1"/>
</dbReference>
<dbReference type="Gene3D" id="1.10.287.730">
    <property type="entry name" value="Helix hairpin bin"/>
    <property type="match status" value="1"/>
</dbReference>
<dbReference type="Gene3D" id="1.10.940.10">
    <property type="entry name" value="NusB-like"/>
    <property type="match status" value="1"/>
</dbReference>
<dbReference type="Gene3D" id="3.30.70.1170">
    <property type="entry name" value="Sun protein, domain 3"/>
    <property type="match status" value="1"/>
</dbReference>
<dbReference type="Gene3D" id="3.40.50.150">
    <property type="entry name" value="Vaccinia Virus protein VP39"/>
    <property type="match status" value="1"/>
</dbReference>
<dbReference type="InterPro" id="IPR049560">
    <property type="entry name" value="MeTrfase_RsmB-F_NOP2_cat"/>
</dbReference>
<dbReference type="InterPro" id="IPR001678">
    <property type="entry name" value="MeTrfase_RsmB-F_NOP2_dom"/>
</dbReference>
<dbReference type="InterPro" id="IPR035926">
    <property type="entry name" value="NusB-like_sf"/>
</dbReference>
<dbReference type="InterPro" id="IPR006027">
    <property type="entry name" value="NusB_RsmB_TIM44"/>
</dbReference>
<dbReference type="InterPro" id="IPR023267">
    <property type="entry name" value="RCMT"/>
</dbReference>
<dbReference type="InterPro" id="IPR004573">
    <property type="entry name" value="rRNA_ssu_MeTfrase_B"/>
</dbReference>
<dbReference type="InterPro" id="IPR054728">
    <property type="entry name" value="RsmB-like_ferredoxin"/>
</dbReference>
<dbReference type="InterPro" id="IPR018314">
    <property type="entry name" value="RsmB/NOL1/NOP2-like_CS"/>
</dbReference>
<dbReference type="InterPro" id="IPR029063">
    <property type="entry name" value="SAM-dependent_MTases_sf"/>
</dbReference>
<dbReference type="NCBIfam" id="NF008149">
    <property type="entry name" value="PRK10901.1"/>
    <property type="match status" value="1"/>
</dbReference>
<dbReference type="NCBIfam" id="NF011494">
    <property type="entry name" value="PRK14902.1"/>
    <property type="match status" value="1"/>
</dbReference>
<dbReference type="NCBIfam" id="TIGR00563">
    <property type="entry name" value="rsmB"/>
    <property type="match status" value="1"/>
</dbReference>
<dbReference type="PANTHER" id="PTHR22807:SF61">
    <property type="entry name" value="NOL1_NOP2_SUN FAMILY PROTEIN _ ANTITERMINATION NUSB DOMAIN-CONTAINING PROTEIN"/>
    <property type="match status" value="1"/>
</dbReference>
<dbReference type="PANTHER" id="PTHR22807">
    <property type="entry name" value="NOP2 YEAST -RELATED NOL1/NOP2/FMU SUN DOMAIN-CONTAINING"/>
    <property type="match status" value="1"/>
</dbReference>
<dbReference type="Pfam" id="PF01189">
    <property type="entry name" value="Methyltr_RsmB-F"/>
    <property type="match status" value="1"/>
</dbReference>
<dbReference type="Pfam" id="PF01029">
    <property type="entry name" value="NusB"/>
    <property type="match status" value="1"/>
</dbReference>
<dbReference type="Pfam" id="PF22458">
    <property type="entry name" value="RsmF-B_ferredox"/>
    <property type="match status" value="1"/>
</dbReference>
<dbReference type="PRINTS" id="PR02008">
    <property type="entry name" value="RCMTFAMILY"/>
</dbReference>
<dbReference type="SUPFAM" id="SSF48013">
    <property type="entry name" value="NusB-like"/>
    <property type="match status" value="1"/>
</dbReference>
<dbReference type="SUPFAM" id="SSF53335">
    <property type="entry name" value="S-adenosyl-L-methionine-dependent methyltransferases"/>
    <property type="match status" value="1"/>
</dbReference>
<dbReference type="PROSITE" id="PS01153">
    <property type="entry name" value="NOL1_NOP2_SUN"/>
    <property type="match status" value="1"/>
</dbReference>
<dbReference type="PROSITE" id="PS51686">
    <property type="entry name" value="SAM_MT_RSMB_NOP"/>
    <property type="match status" value="1"/>
</dbReference>
<name>RSMB_PASMU</name>
<sequence>MQKFVKNVKKQTVLLSTRAIAAQIILQVLDQGKSLSTLIPDTQHQVKTQDLPLLQEICFGVCRVLPRLELIIKQLVDKPLKGKTRIVHCLLLVGLYQLLYTRIPAHAAVDEVVNATTALKAEHFRGLVNGVLRRFLREQETLLVKVDKHWHTLHPDWLVNRLKEAYPNWREIVEANNHKPPMWLRVNQQKNSTETYRTLLAEQGIEAEKADNPCALRLLQPVAVSQLPAFHEGAVSVQDVNAQWSALLLAPENGELILDACAAPGGKTTHILEQAPQAHVVALDVEATRLKRVHENLARMQQQATVICGDATQPAQWLKQLSESAVQFDRILLDAPCSATGVIRRHPDIKWLRQASDISALVALQKQILQALWTVLKPNGILLYATCSVLPEENALQIEQFLTNNVDAKLEPLPFTAVEGSVGYQFLPTENGGDGFYYAKLRKVVS</sequence>
<keyword id="KW-0963">Cytoplasm</keyword>
<keyword id="KW-0489">Methyltransferase</keyword>
<keyword id="KW-1185">Reference proteome</keyword>
<keyword id="KW-0690">Ribosome biogenesis</keyword>
<keyword id="KW-0694">RNA-binding</keyword>
<keyword id="KW-0698">rRNA processing</keyword>
<keyword id="KW-0949">S-adenosyl-L-methionine</keyword>
<keyword id="KW-0808">Transferase</keyword>
<reference key="1">
    <citation type="journal article" date="2001" name="Proc. Natl. Acad. Sci. U.S.A.">
        <title>Complete genomic sequence of Pasteurella multocida Pm70.</title>
        <authorList>
            <person name="May B.J."/>
            <person name="Zhang Q."/>
            <person name="Li L.L."/>
            <person name="Paustian M.L."/>
            <person name="Whittam T.S."/>
            <person name="Kapur V."/>
        </authorList>
    </citation>
    <scope>NUCLEOTIDE SEQUENCE [LARGE SCALE GENOMIC DNA]</scope>
    <source>
        <strain>Pm70</strain>
    </source>
</reference>
<proteinExistence type="inferred from homology"/>
<protein>
    <recommendedName>
        <fullName>Ribosomal RNA small subunit methyltransferase B</fullName>
        <ecNumber>2.1.1.176</ecNumber>
    </recommendedName>
    <alternativeName>
        <fullName>16S rRNA m5C967 methyltransferase</fullName>
    </alternativeName>
    <alternativeName>
        <fullName>rRNA (cytosine-C(5)-)-methyltransferase RsmB</fullName>
    </alternativeName>
</protein>